<reference key="1">
    <citation type="journal article" date="1997" name="J. Bacteriol.">
        <title>Complete genome sequence of Methanobacterium thermoautotrophicum deltaH: functional analysis and comparative genomics.</title>
        <authorList>
            <person name="Smith D.R."/>
            <person name="Doucette-Stamm L.A."/>
            <person name="Deloughery C."/>
            <person name="Lee H.-M."/>
            <person name="Dubois J."/>
            <person name="Aldredge T."/>
            <person name="Bashirzadeh R."/>
            <person name="Blakely D."/>
            <person name="Cook R."/>
            <person name="Gilbert K."/>
            <person name="Harrison D."/>
            <person name="Hoang L."/>
            <person name="Keagle P."/>
            <person name="Lumm W."/>
            <person name="Pothier B."/>
            <person name="Qiu D."/>
            <person name="Spadafora R."/>
            <person name="Vicare R."/>
            <person name="Wang Y."/>
            <person name="Wierzbowski J."/>
            <person name="Gibson R."/>
            <person name="Jiwani N."/>
            <person name="Caruso A."/>
            <person name="Bush D."/>
            <person name="Safer H."/>
            <person name="Patwell D."/>
            <person name="Prabhakar S."/>
            <person name="McDougall S."/>
            <person name="Shimer G."/>
            <person name="Goyal A."/>
            <person name="Pietrovski S."/>
            <person name="Church G.M."/>
            <person name="Daniels C.J."/>
            <person name="Mao J.-I."/>
            <person name="Rice P."/>
            <person name="Noelling J."/>
            <person name="Reeve J.N."/>
        </authorList>
    </citation>
    <scope>NUCLEOTIDE SEQUENCE [LARGE SCALE GENOMIC DNA]</scope>
    <source>
        <strain>ATCC 29096 / DSM 1053 / JCM 10044 / NBRC 100330 / Delta H</strain>
    </source>
</reference>
<protein>
    <recommendedName>
        <fullName evidence="1">Acetyl-CoA decarbonylase/synthase complex subunit gamma</fullName>
        <shortName evidence="1">ACDS complex subunit gamma</shortName>
        <ecNumber evidence="1">2.1.1.245</ecNumber>
    </recommendedName>
    <alternativeName>
        <fullName evidence="1">5-methyltetrahydrosarcinapterin:corrinoid/iron-sulfur protein Co-methyltransferase</fullName>
    </alternativeName>
    <alternativeName>
        <fullName evidence="1">ACDS complex methyltransferase</fullName>
    </alternativeName>
    <alternativeName>
        <fullName evidence="1">Corrinoid/iron-sulfur component large subunit</fullName>
    </alternativeName>
</protein>
<feature type="chain" id="PRO_0000155126" description="Acetyl-CoA decarbonylase/synthase complex subunit gamma">
    <location>
        <begin position="1"/>
        <end position="458"/>
    </location>
</feature>
<feature type="domain" description="4Fe-4S" evidence="2">
    <location>
        <begin position="1"/>
        <end position="59"/>
    </location>
</feature>
<feature type="binding site" evidence="1">
    <location>
        <position position="17"/>
    </location>
    <ligand>
        <name>[4Fe-4S] cluster</name>
        <dbReference type="ChEBI" id="CHEBI:49883"/>
    </ligand>
</feature>
<feature type="binding site" evidence="1">
    <location>
        <position position="20"/>
    </location>
    <ligand>
        <name>[4Fe-4S] cluster</name>
        <dbReference type="ChEBI" id="CHEBI:49883"/>
    </ligand>
</feature>
<feature type="binding site" evidence="1">
    <location>
        <position position="25"/>
    </location>
    <ligand>
        <name>[4Fe-4S] cluster</name>
        <dbReference type="ChEBI" id="CHEBI:49883"/>
    </ligand>
</feature>
<feature type="binding site" evidence="1">
    <location>
        <position position="42"/>
    </location>
    <ligand>
        <name>[4Fe-4S] cluster</name>
        <dbReference type="ChEBI" id="CHEBI:49883"/>
    </ligand>
</feature>
<dbReference type="EC" id="2.1.1.245" evidence="1"/>
<dbReference type="EMBL" id="AE000666">
    <property type="protein sequence ID" value="AAB86185.1"/>
    <property type="molecule type" value="Genomic_DNA"/>
</dbReference>
<dbReference type="PIR" id="C69096">
    <property type="entry name" value="C69096"/>
</dbReference>
<dbReference type="RefSeq" id="WP_010877321.1">
    <property type="nucleotide sequence ID" value="NC_000916.1"/>
</dbReference>
<dbReference type="SMR" id="O27748"/>
<dbReference type="FunCoup" id="O27748">
    <property type="interactions" value="66"/>
</dbReference>
<dbReference type="IntAct" id="O27748">
    <property type="interactions" value="1"/>
</dbReference>
<dbReference type="STRING" id="187420.MTH_1713"/>
<dbReference type="PaxDb" id="187420-MTH_1713"/>
<dbReference type="EnsemblBacteria" id="AAB86185">
    <property type="protein sequence ID" value="AAB86185"/>
    <property type="gene ID" value="MTH_1713"/>
</dbReference>
<dbReference type="GeneID" id="1470798"/>
<dbReference type="KEGG" id="mth:MTH_1713"/>
<dbReference type="PATRIC" id="fig|187420.15.peg.1674"/>
<dbReference type="HOGENOM" id="CLU_050002_0_0_2"/>
<dbReference type="InParanoid" id="O27748"/>
<dbReference type="Proteomes" id="UP000005223">
    <property type="component" value="Chromosome"/>
</dbReference>
<dbReference type="GO" id="GO:0051539">
    <property type="term" value="F:4 iron, 4 sulfur cluster binding"/>
    <property type="evidence" value="ECO:0007669"/>
    <property type="project" value="UniProtKB-KW"/>
</dbReference>
<dbReference type="GO" id="GO:0005506">
    <property type="term" value="F:iron ion binding"/>
    <property type="evidence" value="ECO:0007669"/>
    <property type="project" value="UniProtKB-UniRule"/>
</dbReference>
<dbReference type="GO" id="GO:0008168">
    <property type="term" value="F:methyltransferase activity"/>
    <property type="evidence" value="ECO:0007669"/>
    <property type="project" value="UniProtKB-UniRule"/>
</dbReference>
<dbReference type="GO" id="GO:0046356">
    <property type="term" value="P:acetyl-CoA catabolic process"/>
    <property type="evidence" value="ECO:0007669"/>
    <property type="project" value="InterPro"/>
</dbReference>
<dbReference type="GO" id="GO:0032259">
    <property type="term" value="P:methylation"/>
    <property type="evidence" value="ECO:0007669"/>
    <property type="project" value="UniProtKB-KW"/>
</dbReference>
<dbReference type="Gene3D" id="3.40.50.11600">
    <property type="match status" value="1"/>
</dbReference>
<dbReference type="Gene3D" id="3.20.20.20">
    <property type="entry name" value="Dihydropteroate synthase-like"/>
    <property type="match status" value="1"/>
</dbReference>
<dbReference type="HAMAP" id="MF_01136">
    <property type="entry name" value="CdhE"/>
    <property type="match status" value="1"/>
</dbReference>
<dbReference type="InterPro" id="IPR007202">
    <property type="entry name" value="4Fe-4S_dom"/>
</dbReference>
<dbReference type="InterPro" id="IPR016041">
    <property type="entry name" value="Ac-CoA_synth_d_su_TIM-brl"/>
</dbReference>
<dbReference type="InterPro" id="IPR051069">
    <property type="entry name" value="ACDS_complex_subunit"/>
</dbReference>
<dbReference type="InterPro" id="IPR016218">
    <property type="entry name" value="AcylCoA_decarb/synth_gsu"/>
</dbReference>
<dbReference type="InterPro" id="IPR023427">
    <property type="entry name" value="AcylCoA_decarb/synth_gsu_arc"/>
</dbReference>
<dbReference type="InterPro" id="IPR011005">
    <property type="entry name" value="Dihydropteroate_synth-like_sf"/>
</dbReference>
<dbReference type="NCBIfam" id="NF003195">
    <property type="entry name" value="PRK04165.1"/>
    <property type="match status" value="1"/>
</dbReference>
<dbReference type="PANTHER" id="PTHR36214">
    <property type="match status" value="1"/>
</dbReference>
<dbReference type="PANTHER" id="PTHR36214:SF3">
    <property type="entry name" value="ACETYL-COA DECARBONYLASE_SYNTHASE COMPLEX SUBUNIT GAMMA"/>
    <property type="match status" value="1"/>
</dbReference>
<dbReference type="Pfam" id="PF03599">
    <property type="entry name" value="CdhD"/>
    <property type="match status" value="1"/>
</dbReference>
<dbReference type="Pfam" id="PF04060">
    <property type="entry name" value="FeS"/>
    <property type="match status" value="1"/>
</dbReference>
<dbReference type="PIRSF" id="PIRSF000376">
    <property type="entry name" value="AcCoA_decarb_gamma"/>
    <property type="match status" value="1"/>
</dbReference>
<dbReference type="SUPFAM" id="SSF51717">
    <property type="entry name" value="Dihydropteroate synthetase-like"/>
    <property type="match status" value="1"/>
</dbReference>
<dbReference type="PROSITE" id="PS51656">
    <property type="entry name" value="4FE4S"/>
    <property type="match status" value="1"/>
</dbReference>
<sequence length="458" mass="50231">MQVTAMDVYRLLPKTNCGKCNEASCMAFATKLIEKEVTLDDCPQLSGDERQKLENLLAPAVKEITFGPEENQVVVGGDEVLYRYELTYYNPTALVVDLPDDLPSEELLNRAQRIMELEFERTGEKLTLDAIALRNRSGSPEKFAEAAEAISKLNFPVVLCTFDVEAMKAALEVLGDQKPLLYAAREDNLGEMAELSVSYGCPLVLFSPGDLEEMKNLSRRLRSLGVTEIVLDPGTFTGEGIGDTIDNFVMIRRLAVEDGDDDFRFPIMGIPALSRLTVSDKIEANIREATVAATLMNRYADILILAGTEIWEIMPVLTLRQGLYTDPRKPQAVDPGVYEFGDVDENSPVILTTNFSLTYYTVEGDLKSGDVTAYLLVLDTEGRAVDVSLAGGQLNGPAVADLIKETGIEERVRDKVMIIPGLAAPASGEIEDDTGWRVLVGPRDSSGIPDYLDKLASE</sequence>
<accession>O27748</accession>
<comment type="function">
    <text evidence="1">Part of a complex that catalyzes the reversible cleavage of acetyl-CoA, allowing autotrophic growth from CO(2).</text>
</comment>
<comment type="catalytic activity">
    <reaction evidence="1">
        <text>5,6,7,8-tetrahydrosarcinapterin + methyl-Co(III)-[corrinoid Fe-S protein] = 5-methyltetrahydrosarcinapterin + Co(I)-[corrinoid Fe-S protein] + H(+)</text>
        <dbReference type="Rhea" id="RHEA:45196"/>
        <dbReference type="Rhea" id="RHEA-COMP:11110"/>
        <dbReference type="Rhea" id="RHEA-COMP:11111"/>
        <dbReference type="ChEBI" id="CHEBI:15378"/>
        <dbReference type="ChEBI" id="CHEBI:59924"/>
        <dbReference type="ChEBI" id="CHEBI:64267"/>
        <dbReference type="ChEBI" id="CHEBI:85033"/>
        <dbReference type="ChEBI" id="CHEBI:85035"/>
        <dbReference type="EC" id="2.1.1.245"/>
    </reaction>
</comment>
<comment type="cofactor">
    <cofactor evidence="1">
        <name>corrinoid</name>
        <dbReference type="ChEBI" id="CHEBI:33913"/>
    </cofactor>
</comment>
<comment type="cofactor">
    <cofactor evidence="1">
        <name>[4Fe-4S] cluster</name>
        <dbReference type="ChEBI" id="CHEBI:49883"/>
    </cofactor>
    <text evidence="1">Binds 1 [4Fe-4S] cluster.</text>
</comment>
<comment type="subunit">
    <text evidence="1">Heterodimer of delta and gamma chains. The ACDS complex is made up of alpha, epsilon, beta, gamma and delta chains with a probable stoichiometry of (alpha(2)epsilon(2))(4)-beta(8)-(gamma(1)delta(1))(8).</text>
</comment>
<proteinExistence type="inferred from homology"/>
<gene>
    <name evidence="1" type="primary">cdhE</name>
    <name type="ordered locus">MTH_1713</name>
</gene>
<name>ACDG_METTH</name>
<organism>
    <name type="scientific">Methanothermobacter thermautotrophicus (strain ATCC 29096 / DSM 1053 / JCM 10044 / NBRC 100330 / Delta H)</name>
    <name type="common">Methanobacterium thermoautotrophicum</name>
    <dbReference type="NCBI Taxonomy" id="187420"/>
    <lineage>
        <taxon>Archaea</taxon>
        <taxon>Methanobacteriati</taxon>
        <taxon>Methanobacteriota</taxon>
        <taxon>Methanomada group</taxon>
        <taxon>Methanobacteria</taxon>
        <taxon>Methanobacteriales</taxon>
        <taxon>Methanobacteriaceae</taxon>
        <taxon>Methanothermobacter</taxon>
    </lineage>
</organism>
<evidence type="ECO:0000255" key="1">
    <source>
        <dbReference type="HAMAP-Rule" id="MF_01136"/>
    </source>
</evidence>
<evidence type="ECO:0000255" key="2">
    <source>
        <dbReference type="PROSITE-ProRule" id="PRU00989"/>
    </source>
</evidence>
<keyword id="KW-0004">4Fe-4S</keyword>
<keyword id="KW-0170">Cobalt</keyword>
<keyword id="KW-0408">Iron</keyword>
<keyword id="KW-0411">Iron-sulfur</keyword>
<keyword id="KW-0479">Metal-binding</keyword>
<keyword id="KW-0489">Methyltransferase</keyword>
<keyword id="KW-1185">Reference proteome</keyword>
<keyword id="KW-0808">Transferase</keyword>